<name>MEND_SALHS</name>
<accession>B4TBH6</accession>
<protein>
    <recommendedName>
        <fullName evidence="1">2-succinyl-5-enolpyruvyl-6-hydroxy-3-cyclohexene-1-carboxylate synthase</fullName>
        <shortName evidence="1">SEPHCHC synthase</shortName>
        <ecNumber evidence="1">2.2.1.9</ecNumber>
    </recommendedName>
    <alternativeName>
        <fullName evidence="1">Menaquinone biosynthesis protein MenD</fullName>
    </alternativeName>
</protein>
<dbReference type="EC" id="2.2.1.9" evidence="1"/>
<dbReference type="EMBL" id="CP001120">
    <property type="protein sequence ID" value="ACF68842.1"/>
    <property type="molecule type" value="Genomic_DNA"/>
</dbReference>
<dbReference type="RefSeq" id="WP_000116381.1">
    <property type="nucleotide sequence ID" value="NC_011083.1"/>
</dbReference>
<dbReference type="SMR" id="B4TBH6"/>
<dbReference type="KEGG" id="seh:SeHA_C2549"/>
<dbReference type="HOGENOM" id="CLU_006051_3_0_6"/>
<dbReference type="UniPathway" id="UPA00079"/>
<dbReference type="UniPathway" id="UPA01057">
    <property type="reaction ID" value="UER00164"/>
</dbReference>
<dbReference type="Proteomes" id="UP000001866">
    <property type="component" value="Chromosome"/>
</dbReference>
<dbReference type="GO" id="GO:0070204">
    <property type="term" value="F:2-succinyl-5-enolpyruvyl-6-hydroxy-3-cyclohexene-1-carboxylic-acid synthase activity"/>
    <property type="evidence" value="ECO:0007669"/>
    <property type="project" value="UniProtKB-UniRule"/>
</dbReference>
<dbReference type="GO" id="GO:0000287">
    <property type="term" value="F:magnesium ion binding"/>
    <property type="evidence" value="ECO:0007669"/>
    <property type="project" value="UniProtKB-UniRule"/>
</dbReference>
<dbReference type="GO" id="GO:0030145">
    <property type="term" value="F:manganese ion binding"/>
    <property type="evidence" value="ECO:0007669"/>
    <property type="project" value="UniProtKB-UniRule"/>
</dbReference>
<dbReference type="GO" id="GO:0030976">
    <property type="term" value="F:thiamine pyrophosphate binding"/>
    <property type="evidence" value="ECO:0007669"/>
    <property type="project" value="UniProtKB-UniRule"/>
</dbReference>
<dbReference type="GO" id="GO:0009234">
    <property type="term" value="P:menaquinone biosynthetic process"/>
    <property type="evidence" value="ECO:0007669"/>
    <property type="project" value="UniProtKB-UniRule"/>
</dbReference>
<dbReference type="CDD" id="cd07037">
    <property type="entry name" value="TPP_PYR_MenD"/>
    <property type="match status" value="1"/>
</dbReference>
<dbReference type="CDD" id="cd02009">
    <property type="entry name" value="TPP_SHCHC_synthase"/>
    <property type="match status" value="1"/>
</dbReference>
<dbReference type="FunFam" id="3.40.50.1220:FF:000010">
    <property type="entry name" value="2-succinyl-5-enolpyruvyl-6-hydroxy-3-cyclohexene-1-carboxylate synthase"/>
    <property type="match status" value="1"/>
</dbReference>
<dbReference type="FunFam" id="3.40.50.970:FF:000029">
    <property type="entry name" value="2-succinyl-5-enolpyruvyl-6-hydroxy-3-cyclohexene-1-carboxylate synthase"/>
    <property type="match status" value="1"/>
</dbReference>
<dbReference type="Gene3D" id="3.40.50.970">
    <property type="match status" value="2"/>
</dbReference>
<dbReference type="Gene3D" id="3.40.50.1220">
    <property type="entry name" value="TPP-binding domain"/>
    <property type="match status" value="1"/>
</dbReference>
<dbReference type="HAMAP" id="MF_01659">
    <property type="entry name" value="MenD"/>
    <property type="match status" value="1"/>
</dbReference>
<dbReference type="InterPro" id="IPR004433">
    <property type="entry name" value="MenaQ_synth_MenD"/>
</dbReference>
<dbReference type="InterPro" id="IPR032264">
    <property type="entry name" value="MenD_middle"/>
</dbReference>
<dbReference type="InterPro" id="IPR029061">
    <property type="entry name" value="THDP-binding"/>
</dbReference>
<dbReference type="InterPro" id="IPR012001">
    <property type="entry name" value="Thiamin_PyroP_enz_TPP-bd_dom"/>
</dbReference>
<dbReference type="InterPro" id="IPR011766">
    <property type="entry name" value="TPP_enzyme_TPP-bd"/>
</dbReference>
<dbReference type="NCBIfam" id="TIGR00173">
    <property type="entry name" value="menD"/>
    <property type="match status" value="1"/>
</dbReference>
<dbReference type="PANTHER" id="PTHR42916">
    <property type="entry name" value="2-SUCCINYL-5-ENOLPYRUVYL-6-HYDROXY-3-CYCLOHEXENE-1-CARBOXYLATE SYNTHASE"/>
    <property type="match status" value="1"/>
</dbReference>
<dbReference type="PANTHER" id="PTHR42916:SF1">
    <property type="entry name" value="PROTEIN PHYLLO, CHLOROPLASTIC"/>
    <property type="match status" value="1"/>
</dbReference>
<dbReference type="Pfam" id="PF02775">
    <property type="entry name" value="TPP_enzyme_C"/>
    <property type="match status" value="1"/>
</dbReference>
<dbReference type="Pfam" id="PF16582">
    <property type="entry name" value="TPP_enzyme_M_2"/>
    <property type="match status" value="1"/>
</dbReference>
<dbReference type="Pfam" id="PF02776">
    <property type="entry name" value="TPP_enzyme_N"/>
    <property type="match status" value="1"/>
</dbReference>
<dbReference type="PIRSF" id="PIRSF004983">
    <property type="entry name" value="MenD"/>
    <property type="match status" value="1"/>
</dbReference>
<dbReference type="SUPFAM" id="SSF52518">
    <property type="entry name" value="Thiamin diphosphate-binding fold (THDP-binding)"/>
    <property type="match status" value="2"/>
</dbReference>
<reference key="1">
    <citation type="journal article" date="2011" name="J. Bacteriol.">
        <title>Comparative genomics of 28 Salmonella enterica isolates: evidence for CRISPR-mediated adaptive sublineage evolution.</title>
        <authorList>
            <person name="Fricke W.F."/>
            <person name="Mammel M.K."/>
            <person name="McDermott P.F."/>
            <person name="Tartera C."/>
            <person name="White D.G."/>
            <person name="Leclerc J.E."/>
            <person name="Ravel J."/>
            <person name="Cebula T.A."/>
        </authorList>
    </citation>
    <scope>NUCLEOTIDE SEQUENCE [LARGE SCALE GENOMIC DNA]</scope>
    <source>
        <strain>SL476</strain>
    </source>
</reference>
<feature type="chain" id="PRO_1000187092" description="2-succinyl-5-enolpyruvyl-6-hydroxy-3-cyclohexene-1-carboxylate synthase">
    <location>
        <begin position="1"/>
        <end position="556"/>
    </location>
</feature>
<proteinExistence type="inferred from homology"/>
<organism>
    <name type="scientific">Salmonella heidelberg (strain SL476)</name>
    <dbReference type="NCBI Taxonomy" id="454169"/>
    <lineage>
        <taxon>Bacteria</taxon>
        <taxon>Pseudomonadati</taxon>
        <taxon>Pseudomonadota</taxon>
        <taxon>Gammaproteobacteria</taxon>
        <taxon>Enterobacterales</taxon>
        <taxon>Enterobacteriaceae</taxon>
        <taxon>Salmonella</taxon>
    </lineage>
</organism>
<gene>
    <name evidence="1" type="primary">menD</name>
    <name type="ordered locus">SeHA_C2549</name>
</gene>
<keyword id="KW-0460">Magnesium</keyword>
<keyword id="KW-0464">Manganese</keyword>
<keyword id="KW-0474">Menaquinone biosynthesis</keyword>
<keyword id="KW-0479">Metal-binding</keyword>
<keyword id="KW-0786">Thiamine pyrophosphate</keyword>
<keyword id="KW-0808">Transferase</keyword>
<comment type="function">
    <text evidence="1">Catalyzes the thiamine diphosphate-dependent decarboxylation of 2-oxoglutarate and the subsequent addition of the resulting succinic semialdehyde-thiamine pyrophosphate anion to isochorismate to yield 2-succinyl-5-enolpyruvyl-6-hydroxy-3-cyclohexene-1-carboxylate (SEPHCHC).</text>
</comment>
<comment type="catalytic activity">
    <reaction evidence="1">
        <text>isochorismate + 2-oxoglutarate + H(+) = 5-enolpyruvoyl-6-hydroxy-2-succinyl-cyclohex-3-ene-1-carboxylate + CO2</text>
        <dbReference type="Rhea" id="RHEA:25593"/>
        <dbReference type="ChEBI" id="CHEBI:15378"/>
        <dbReference type="ChEBI" id="CHEBI:16526"/>
        <dbReference type="ChEBI" id="CHEBI:16810"/>
        <dbReference type="ChEBI" id="CHEBI:29780"/>
        <dbReference type="ChEBI" id="CHEBI:58818"/>
        <dbReference type="EC" id="2.2.1.9"/>
    </reaction>
</comment>
<comment type="cofactor">
    <cofactor evidence="1">
        <name>Mg(2+)</name>
        <dbReference type="ChEBI" id="CHEBI:18420"/>
    </cofactor>
    <cofactor evidence="1">
        <name>Mn(2+)</name>
        <dbReference type="ChEBI" id="CHEBI:29035"/>
    </cofactor>
</comment>
<comment type="cofactor">
    <cofactor evidence="1">
        <name>thiamine diphosphate</name>
        <dbReference type="ChEBI" id="CHEBI:58937"/>
    </cofactor>
    <text evidence="1">Binds 1 thiamine pyrophosphate per subunit.</text>
</comment>
<comment type="pathway">
    <text evidence="1">Quinol/quinone metabolism; 1,4-dihydroxy-2-naphthoate biosynthesis; 1,4-dihydroxy-2-naphthoate from chorismate: step 2/7.</text>
</comment>
<comment type="pathway">
    <text evidence="1">Quinol/quinone metabolism; menaquinone biosynthesis.</text>
</comment>
<comment type="subunit">
    <text evidence="1">Homodimer.</text>
</comment>
<comment type="similarity">
    <text evidence="1">Belongs to the TPP enzyme family. MenD subfamily.</text>
</comment>
<sequence>MSVSAFNRRWAAVILEALTRHGVRHVCIAPGSRSTPLTLAAAENPAFIHHTHFDERGLGHLALGLAKVSQQPVAVIVTSGTAVANLYPALIEAGLTGEKLILLTADRPPELIDCGANQAIRQAGMFASHPSQTLSLPRPTQDIPARWLVSTIDNALAMLHAGALHINCPFAEPLYGDMNDTGLVWQQRLGDWWQDEKPWLREARRLASDKQRDWFFWRQKRGVVVAGRMSAEEGKKVAQWAQTLGWPLIGDVLSQTGQPLPCADLWLGNAKAVTELQQAQIVVQLGSSLTGKRLLQWQATCEPEEYWVIDNIEGRLDPAHHRGRRLVAKIADWLELHPAEKRKPWCVEIPRLAELAWQRVVAQRDTFGEAQLAHRIRDYLPEQGQLFVGNSLVVRLIDALSQLPAGYPVYSNRGASGIDGLLSTAAGVQRASAKSTLAIVGDLSALYDLNALALLRQVSAPFVLIVVNNNGGQIFSLLPTPQSKRERFYLMPQNVHFDHAAAMFNLRYHRPENWEELESALAGAWRTPAATVIELVVNDTDGAQTLQQLLAQVSHL</sequence>
<evidence type="ECO:0000255" key="1">
    <source>
        <dbReference type="HAMAP-Rule" id="MF_01659"/>
    </source>
</evidence>